<feature type="chain" id="PRO_0000378183" description="Nonsense-mediated mRNA decay factor SMG9">
    <location>
        <begin position="1"/>
        <end position="505"/>
    </location>
</feature>
<feature type="region of interest" description="Disordered" evidence="3">
    <location>
        <begin position="1"/>
        <end position="127"/>
    </location>
</feature>
<feature type="compositionally biased region" description="Basic and acidic residues" evidence="3">
    <location>
        <begin position="37"/>
        <end position="51"/>
    </location>
</feature>
<reference key="1">
    <citation type="journal article" date="2010" name="BMC Genomics">
        <title>Salmo salar and Esox lucius full-length cDNA sequences reveal changes in evolutionary pressures on a post-tetraploidization genome.</title>
        <authorList>
            <person name="Leong J.S."/>
            <person name="Jantzen S.G."/>
            <person name="von Schalburg K.R."/>
            <person name="Cooper G.A."/>
            <person name="Messmer A.M."/>
            <person name="Liao N.Y."/>
            <person name="Munro S."/>
            <person name="Moore R."/>
            <person name="Holt R.A."/>
            <person name="Jones S.J."/>
            <person name="Davidson W.S."/>
            <person name="Koop B.F."/>
        </authorList>
    </citation>
    <scope>NUCLEOTIDE SEQUENCE [LARGE SCALE MRNA]</scope>
    <source>
        <tissue>Brain</tissue>
    </source>
</reference>
<protein>
    <recommendedName>
        <fullName evidence="2">Nonsense-mediated mRNA decay factor SMG9</fullName>
    </recommendedName>
    <alternativeName>
        <fullName>Protein smg-9 homolog</fullName>
    </alternativeName>
</protein>
<proteinExistence type="evidence at transcript level"/>
<comment type="function">
    <text evidence="1">Involved in nonsense-mediated decay (NMD) of mRNAs containing premature stop codons. Is recruited by release factors to stalled ribosomes together with smg1 and smg8 (forming the SMG1C protein kinase complex) and, in the SMG1C complex, is required for the efficient association between smg1 and smg8 (By similarity).</text>
</comment>
<comment type="subunit">
    <text evidence="1">Component of the SMG1C complex composed of smg1, smg8 and smg9.</text>
</comment>
<comment type="similarity">
    <text evidence="4">Belongs to the SMG9 family.</text>
</comment>
<organism>
    <name type="scientific">Salmo salar</name>
    <name type="common">Atlantic salmon</name>
    <dbReference type="NCBI Taxonomy" id="8030"/>
    <lineage>
        <taxon>Eukaryota</taxon>
        <taxon>Metazoa</taxon>
        <taxon>Chordata</taxon>
        <taxon>Craniata</taxon>
        <taxon>Vertebrata</taxon>
        <taxon>Euteleostomi</taxon>
        <taxon>Actinopterygii</taxon>
        <taxon>Neopterygii</taxon>
        <taxon>Teleostei</taxon>
        <taxon>Protacanthopterygii</taxon>
        <taxon>Salmoniformes</taxon>
        <taxon>Salmonidae</taxon>
        <taxon>Salmoninae</taxon>
        <taxon>Salmo</taxon>
    </lineage>
</organism>
<name>SMG9_SALSA</name>
<dbReference type="EMBL" id="BT044784">
    <property type="protein sequence ID" value="ACI33046.1"/>
    <property type="molecule type" value="mRNA"/>
</dbReference>
<dbReference type="RefSeq" id="NP_001133333.1">
    <property type="nucleotide sequence ID" value="NM_001139861.1"/>
</dbReference>
<dbReference type="RefSeq" id="XP_014056854.1">
    <property type="nucleotide sequence ID" value="XM_014201379.2"/>
</dbReference>
<dbReference type="SMR" id="B5X165"/>
<dbReference type="STRING" id="8030.ENSSSAP00000004709"/>
<dbReference type="PaxDb" id="8030-ENSSSAP00000004709"/>
<dbReference type="Ensembl" id="ENSSSAT00070019048">
    <property type="protein sequence ID" value="ENSSSAP00070018095"/>
    <property type="gene ID" value="ENSSSAG00070012037"/>
</dbReference>
<dbReference type="GeneID" id="100194832"/>
<dbReference type="KEGG" id="sasa:100194832"/>
<dbReference type="CTD" id="56006"/>
<dbReference type="Proteomes" id="UP000087266">
    <property type="component" value="Chromosome ssa05"/>
</dbReference>
<dbReference type="Bgee" id="ENSSSAG00000002370">
    <property type="expression patterns" value="Expressed in testis and 23 other cell types or tissues"/>
</dbReference>
<dbReference type="GO" id="GO:0000184">
    <property type="term" value="P:nuclear-transcribed mRNA catabolic process, nonsense-mediated decay"/>
    <property type="evidence" value="ECO:0000250"/>
    <property type="project" value="UniProtKB"/>
</dbReference>
<dbReference type="FunFam" id="3.40.50.300:FF:001272">
    <property type="entry name" value="SMG9 isoform 2"/>
    <property type="match status" value="1"/>
</dbReference>
<dbReference type="Gene3D" id="3.40.50.300">
    <property type="entry name" value="P-loop containing nucleotide triphosphate hydrolases"/>
    <property type="match status" value="1"/>
</dbReference>
<dbReference type="InterPro" id="IPR027417">
    <property type="entry name" value="P-loop_NTPase"/>
</dbReference>
<dbReference type="InterPro" id="IPR039177">
    <property type="entry name" value="SMG9"/>
</dbReference>
<dbReference type="PANTHER" id="PTHR14270">
    <property type="entry name" value="NONSENSE-MEDIATED MRNA DECAY FACTOR SMG9"/>
    <property type="match status" value="1"/>
</dbReference>
<dbReference type="PANTHER" id="PTHR14270:SF0">
    <property type="entry name" value="NONSENSE-MEDIATED MRNA DECAY FACTOR SMG9"/>
    <property type="match status" value="1"/>
</dbReference>
<accession>B5X165</accession>
<sequence length="505" mass="56289">MSESGHSQPGMYGQGRRRRRRRDRDVGPPGQNLSGPSRDREYVPRERRDGSEEPPGPLLQKTPIILAKPPGERSKPSQSVPIGGGQALEKPIMLIKSREDGGKPGTPPEVASPCSGASKLEREGQRPTQPVYQIQNRGMGAAASSGAVDPVIGQTKLVPPEKMKHSIKLVDDQMNWCDSAMEYLRDQTDMLVVGVIGLQGTGKSTIMSLLSANAPEEDQRGYVFRAQTQEIKERGGNQSTGIDFYITQERVIFLDTQPILSPSILDHLINNDRKLPPEYNLPHTYVEMQSLQITAFLFTVCHVVIVIQDWFTDINLYRFLQTAEMLKPSTPSASHDSTGSSGNEEGSEYYPHIVFLQNKSSRDEFCPRNLKKMHMAVDKLMAHSHLKYKGTLSMLDCNIFPGLDRDYLETEVNMFLLPLMENEGEDALTKAGSGSAPLFSLLPGYRGHPTFSSQVSKLRSQILAMSRCQLSHTILTEKNWFHYAARIWDGVKKSSALSEYSRLQA</sequence>
<keyword id="KW-0866">Nonsense-mediated mRNA decay</keyword>
<keyword id="KW-1185">Reference proteome</keyword>
<gene>
    <name type="primary">smg9</name>
</gene>
<evidence type="ECO:0000250" key="1"/>
<evidence type="ECO:0000250" key="2">
    <source>
        <dbReference type="UniProtKB" id="Q9H0W8"/>
    </source>
</evidence>
<evidence type="ECO:0000256" key="3">
    <source>
        <dbReference type="SAM" id="MobiDB-lite"/>
    </source>
</evidence>
<evidence type="ECO:0000305" key="4"/>